<sequence>MKKILVTGGTGFIGSHTVVSLLKSGHQVVILDNLCNSSINILPRLKTITGQEIPFYQGDIRDREILRRIFAENRIDSVIHFAGLKAVGESVAEPMKYYDNNVSGSLVLAEEMARAGVFSIVFSSSATVYGDPGKVPYTEDMPPGDTTSPYGASKSMVERILTDIQKADPRWSMILLRYFNPIGAHESGLIGEQPNGIPNNLLPYICQVAAGKLPQLAVFGDDYPTPDGTGMRDYIHVMDLAEGHVAAMQAKSNVAGTHLLNLGSGRASSVLEIIRAFEAASGLTIPYEVKPRRAGDLACFYADPSYTKAQIGWQTQRDLTQMMEDSWRWVSNNPNGYDD</sequence>
<keyword id="KW-0119">Carbohydrate metabolism</keyword>
<keyword id="KW-0299">Galactose metabolism</keyword>
<keyword id="KW-0413">Isomerase</keyword>
<keyword id="KW-0520">NAD</keyword>
<keyword id="KW-1185">Reference proteome</keyword>
<dbReference type="EC" id="5.1.3.2"/>
<dbReference type="EMBL" id="L20495">
    <property type="protein sequence ID" value="AAA65535.1"/>
    <property type="molecule type" value="Genomic_DNA"/>
</dbReference>
<dbReference type="EMBL" id="AE002098">
    <property type="protein sequence ID" value="AAF40532.1"/>
    <property type="molecule type" value="Genomic_DNA"/>
</dbReference>
<dbReference type="PIR" id="S39638">
    <property type="entry name" value="S39638"/>
</dbReference>
<dbReference type="RefSeq" id="NP_273128.1">
    <property type="nucleotide sequence ID" value="NC_003112.2"/>
</dbReference>
<dbReference type="RefSeq" id="WP_002249104.1">
    <property type="nucleotide sequence ID" value="NC_003112.2"/>
</dbReference>
<dbReference type="SMR" id="P56985"/>
<dbReference type="FunCoup" id="P56985">
    <property type="interactions" value="379"/>
</dbReference>
<dbReference type="STRING" id="122586.NMB0064"/>
<dbReference type="PaxDb" id="122586-NMB0064"/>
<dbReference type="KEGG" id="nme:NMB0064"/>
<dbReference type="PATRIC" id="fig|122586.8.peg.100"/>
<dbReference type="HOGENOM" id="CLU_007383_1_10_4"/>
<dbReference type="InParanoid" id="P56985"/>
<dbReference type="OrthoDB" id="9803010at2"/>
<dbReference type="UniPathway" id="UPA00214"/>
<dbReference type="Proteomes" id="UP000000425">
    <property type="component" value="Chromosome"/>
</dbReference>
<dbReference type="GO" id="GO:0005829">
    <property type="term" value="C:cytosol"/>
    <property type="evidence" value="ECO:0000318"/>
    <property type="project" value="GO_Central"/>
</dbReference>
<dbReference type="GO" id="GO:0003978">
    <property type="term" value="F:UDP-glucose 4-epimerase activity"/>
    <property type="evidence" value="ECO:0000318"/>
    <property type="project" value="GO_Central"/>
</dbReference>
<dbReference type="GO" id="GO:0006012">
    <property type="term" value="P:galactose metabolic process"/>
    <property type="evidence" value="ECO:0007669"/>
    <property type="project" value="UniProtKB-UniPathway"/>
</dbReference>
<dbReference type="GO" id="GO:0005996">
    <property type="term" value="P:monosaccharide metabolic process"/>
    <property type="evidence" value="ECO:0000318"/>
    <property type="project" value="GO_Central"/>
</dbReference>
<dbReference type="CDD" id="cd05247">
    <property type="entry name" value="UDP_G4E_1_SDR_e"/>
    <property type="match status" value="1"/>
</dbReference>
<dbReference type="Gene3D" id="3.40.50.720">
    <property type="entry name" value="NAD(P)-binding Rossmann-like Domain"/>
    <property type="match status" value="1"/>
</dbReference>
<dbReference type="Gene3D" id="3.90.25.10">
    <property type="entry name" value="UDP-galactose 4-epimerase, domain 1"/>
    <property type="match status" value="1"/>
</dbReference>
<dbReference type="InterPro" id="IPR001509">
    <property type="entry name" value="Epimerase_deHydtase"/>
</dbReference>
<dbReference type="InterPro" id="IPR036291">
    <property type="entry name" value="NAD(P)-bd_dom_sf"/>
</dbReference>
<dbReference type="InterPro" id="IPR005886">
    <property type="entry name" value="UDP_G4E"/>
</dbReference>
<dbReference type="NCBIfam" id="TIGR01179">
    <property type="entry name" value="galE"/>
    <property type="match status" value="1"/>
</dbReference>
<dbReference type="NCBIfam" id="NF007956">
    <property type="entry name" value="PRK10675.1"/>
    <property type="match status" value="1"/>
</dbReference>
<dbReference type="PANTHER" id="PTHR43725">
    <property type="entry name" value="UDP-GLUCOSE 4-EPIMERASE"/>
    <property type="match status" value="1"/>
</dbReference>
<dbReference type="PANTHER" id="PTHR43725:SF47">
    <property type="entry name" value="UDP-GLUCOSE 4-EPIMERASE"/>
    <property type="match status" value="1"/>
</dbReference>
<dbReference type="Pfam" id="PF01370">
    <property type="entry name" value="Epimerase"/>
    <property type="match status" value="1"/>
</dbReference>
<dbReference type="SUPFAM" id="SSF51735">
    <property type="entry name" value="NAD(P)-binding Rossmann-fold domains"/>
    <property type="match status" value="1"/>
</dbReference>
<name>GALE_NEIMB</name>
<accession>P56985</accession>
<accession>Q59617</accession>
<accession>Q59624</accession>
<gene>
    <name type="primary">galE</name>
    <name type="ordered locus">NMB0064</name>
</gene>
<comment type="function">
    <text evidence="2">Involved in the metabolism of galactose. Plays an essential role in the incorporation of galactose into meningococcal lipopolysaccharide surface molecules, which are important for pathogenesis. Catalyzes the conversion of UDP-galactose (UDP-Gal) to UDP-glucose (UDP-Glc) through a mechanism involving the transient reduction of NAD.</text>
</comment>
<comment type="catalytic activity">
    <reaction>
        <text>UDP-alpha-D-glucose = UDP-alpha-D-galactose</text>
        <dbReference type="Rhea" id="RHEA:22168"/>
        <dbReference type="ChEBI" id="CHEBI:58885"/>
        <dbReference type="ChEBI" id="CHEBI:66914"/>
        <dbReference type="EC" id="5.1.3.2"/>
    </reaction>
</comment>
<comment type="cofactor">
    <cofactor evidence="1">
        <name>NAD(+)</name>
        <dbReference type="ChEBI" id="CHEBI:57540"/>
    </cofactor>
</comment>
<comment type="pathway">
    <text>Carbohydrate metabolism; galactose metabolism.</text>
</comment>
<comment type="subunit">
    <text evidence="1">Homodimer.</text>
</comment>
<comment type="similarity">
    <text evidence="3">Belongs to the NAD(P)-dependent epimerase/dehydratase family.</text>
</comment>
<protein>
    <recommendedName>
        <fullName>UDP-glucose 4-epimerase</fullName>
        <ecNumber>5.1.3.2</ecNumber>
    </recommendedName>
    <alternativeName>
        <fullName>Galactowaldenase</fullName>
    </alternativeName>
    <alternativeName>
        <fullName>UDP-galactose 4-epimerase</fullName>
    </alternativeName>
</protein>
<reference key="1">
    <citation type="journal article" date="1993" name="Mol. Microbiol.">
        <title>Cloning and molecular analysis of the galE gene of Neisseria meningitidis and its role in lipopolysaccharide biosynthesis.</title>
        <authorList>
            <person name="Jennings M.P."/>
            <person name="van der Ley P."/>
            <person name="Wilks K.E."/>
            <person name="Maskell D.J."/>
            <person name="Poolman J.T."/>
            <person name="Moxon E.R."/>
        </authorList>
    </citation>
    <scope>NUCLEOTIDE SEQUENCE [GENOMIC DNA]</scope>
    <scope>FUNCTION</scope>
    <source>
        <strain>ATCC BAA-335 / MC58</strain>
    </source>
</reference>
<reference key="2">
    <citation type="journal article" date="2000" name="Science">
        <title>Complete genome sequence of Neisseria meningitidis serogroup B strain MC58.</title>
        <authorList>
            <person name="Tettelin H."/>
            <person name="Saunders N.J."/>
            <person name="Heidelberg J.F."/>
            <person name="Jeffries A.C."/>
            <person name="Nelson K.E."/>
            <person name="Eisen J.A."/>
            <person name="Ketchum K.A."/>
            <person name="Hood D.W."/>
            <person name="Peden J.F."/>
            <person name="Dodson R.J."/>
            <person name="Nelson W.C."/>
            <person name="Gwinn M.L."/>
            <person name="DeBoy R.T."/>
            <person name="Peterson J.D."/>
            <person name="Hickey E.K."/>
            <person name="Haft D.H."/>
            <person name="Salzberg S.L."/>
            <person name="White O."/>
            <person name="Fleischmann R.D."/>
            <person name="Dougherty B.A."/>
            <person name="Mason T.M."/>
            <person name="Ciecko A."/>
            <person name="Parksey D.S."/>
            <person name="Blair E."/>
            <person name="Cittone H."/>
            <person name="Clark E.B."/>
            <person name="Cotton M.D."/>
            <person name="Utterback T.R."/>
            <person name="Khouri H.M."/>
            <person name="Qin H."/>
            <person name="Vamathevan J.J."/>
            <person name="Gill J."/>
            <person name="Scarlato V."/>
            <person name="Masignani V."/>
            <person name="Pizza M."/>
            <person name="Grandi G."/>
            <person name="Sun L."/>
            <person name="Smith H.O."/>
            <person name="Fraser C.M."/>
            <person name="Moxon E.R."/>
            <person name="Rappuoli R."/>
            <person name="Venter J.C."/>
        </authorList>
    </citation>
    <scope>NUCLEOTIDE SEQUENCE [LARGE SCALE GENOMIC DNA]</scope>
    <source>
        <strain>ATCC BAA-335 / MC58</strain>
    </source>
</reference>
<feature type="chain" id="PRO_0000183213" description="UDP-glucose 4-epimerase">
    <location>
        <begin position="1"/>
        <end position="339"/>
    </location>
</feature>
<feature type="active site" description="Proton acceptor" evidence="1">
    <location>
        <position position="150"/>
    </location>
</feature>
<feature type="binding site" evidence="1">
    <location>
        <begin position="12"/>
        <end position="13"/>
    </location>
    <ligand>
        <name>NAD(+)</name>
        <dbReference type="ChEBI" id="CHEBI:57540"/>
    </ligand>
</feature>
<feature type="binding site" evidence="1">
    <location>
        <begin position="32"/>
        <end position="37"/>
    </location>
    <ligand>
        <name>NAD(+)</name>
        <dbReference type="ChEBI" id="CHEBI:57540"/>
    </ligand>
</feature>
<feature type="binding site" evidence="1">
    <location>
        <begin position="59"/>
        <end position="60"/>
    </location>
    <ligand>
        <name>NAD(+)</name>
        <dbReference type="ChEBI" id="CHEBI:57540"/>
    </ligand>
</feature>
<feature type="binding site" evidence="1">
    <location>
        <begin position="81"/>
        <end position="85"/>
    </location>
    <ligand>
        <name>NAD(+)</name>
        <dbReference type="ChEBI" id="CHEBI:57540"/>
    </ligand>
</feature>
<feature type="binding site" evidence="1">
    <location>
        <position position="100"/>
    </location>
    <ligand>
        <name>NAD(+)</name>
        <dbReference type="ChEBI" id="CHEBI:57540"/>
    </ligand>
</feature>
<feature type="binding site" evidence="1">
    <location>
        <position position="125"/>
    </location>
    <ligand>
        <name>NAD(+)</name>
        <dbReference type="ChEBI" id="CHEBI:57540"/>
    </ligand>
</feature>
<feature type="binding site" evidence="1">
    <location>
        <position position="125"/>
    </location>
    <ligand>
        <name>substrate</name>
    </ligand>
</feature>
<feature type="binding site" evidence="1">
    <location>
        <position position="150"/>
    </location>
    <ligand>
        <name>NAD(+)</name>
        <dbReference type="ChEBI" id="CHEBI:57540"/>
    </ligand>
</feature>
<feature type="binding site" evidence="1">
    <location>
        <position position="150"/>
    </location>
    <ligand>
        <name>substrate</name>
    </ligand>
</feature>
<feature type="binding site" evidence="1">
    <location>
        <position position="154"/>
    </location>
    <ligand>
        <name>NAD(+)</name>
        <dbReference type="ChEBI" id="CHEBI:57540"/>
    </ligand>
</feature>
<feature type="binding site" evidence="1">
    <location>
        <position position="179"/>
    </location>
    <ligand>
        <name>NAD(+)</name>
        <dbReference type="ChEBI" id="CHEBI:57540"/>
    </ligand>
</feature>
<feature type="binding site" evidence="1">
    <location>
        <position position="180"/>
    </location>
    <ligand>
        <name>substrate</name>
    </ligand>
</feature>
<feature type="binding site" evidence="1">
    <location>
        <begin position="200"/>
        <end position="201"/>
    </location>
    <ligand>
        <name>substrate</name>
    </ligand>
</feature>
<feature type="binding site" evidence="1">
    <location>
        <begin position="217"/>
        <end position="219"/>
    </location>
    <ligand>
        <name>substrate</name>
    </ligand>
</feature>
<feature type="binding site" evidence="1">
    <location>
        <position position="232"/>
    </location>
    <ligand>
        <name>substrate</name>
    </ligand>
</feature>
<feature type="binding site" evidence="1">
    <location>
        <begin position="293"/>
        <end position="296"/>
    </location>
    <ligand>
        <name>substrate</name>
    </ligand>
</feature>
<organism>
    <name type="scientific">Neisseria meningitidis serogroup B (strain ATCC BAA-335 / MC58)</name>
    <dbReference type="NCBI Taxonomy" id="122586"/>
    <lineage>
        <taxon>Bacteria</taxon>
        <taxon>Pseudomonadati</taxon>
        <taxon>Pseudomonadota</taxon>
        <taxon>Betaproteobacteria</taxon>
        <taxon>Neisseriales</taxon>
        <taxon>Neisseriaceae</taxon>
        <taxon>Neisseria</taxon>
    </lineage>
</organism>
<proteinExistence type="inferred from homology"/>
<evidence type="ECO:0000250" key="1"/>
<evidence type="ECO:0000269" key="2">
    <source>
    </source>
</evidence>
<evidence type="ECO:0000305" key="3"/>